<sequence length="66" mass="7533">MKASDVRGFTADQLKDELAKLKKEQFNLRFQKATGQLEKSSRINEVRKDIARVKTIARQKAAEVKA</sequence>
<dbReference type="EMBL" id="CP001191">
    <property type="protein sequence ID" value="ACI54634.1"/>
    <property type="molecule type" value="Genomic_DNA"/>
</dbReference>
<dbReference type="RefSeq" id="WP_003547556.1">
    <property type="nucleotide sequence ID" value="NC_011369.1"/>
</dbReference>
<dbReference type="SMR" id="B5ZYU3"/>
<dbReference type="STRING" id="395492.Rleg2_1340"/>
<dbReference type="GeneID" id="75219567"/>
<dbReference type="KEGG" id="rlt:Rleg2_1340"/>
<dbReference type="eggNOG" id="COG0255">
    <property type="taxonomic scope" value="Bacteria"/>
</dbReference>
<dbReference type="HOGENOM" id="CLU_158491_1_0_5"/>
<dbReference type="Proteomes" id="UP000008330">
    <property type="component" value="Chromosome"/>
</dbReference>
<dbReference type="GO" id="GO:0022625">
    <property type="term" value="C:cytosolic large ribosomal subunit"/>
    <property type="evidence" value="ECO:0007669"/>
    <property type="project" value="TreeGrafter"/>
</dbReference>
<dbReference type="GO" id="GO:0003735">
    <property type="term" value="F:structural constituent of ribosome"/>
    <property type="evidence" value="ECO:0007669"/>
    <property type="project" value="InterPro"/>
</dbReference>
<dbReference type="GO" id="GO:0006412">
    <property type="term" value="P:translation"/>
    <property type="evidence" value="ECO:0007669"/>
    <property type="project" value="UniProtKB-UniRule"/>
</dbReference>
<dbReference type="CDD" id="cd00427">
    <property type="entry name" value="Ribosomal_L29_HIP"/>
    <property type="match status" value="1"/>
</dbReference>
<dbReference type="FunFam" id="1.10.287.310:FF:000001">
    <property type="entry name" value="50S ribosomal protein L29"/>
    <property type="match status" value="1"/>
</dbReference>
<dbReference type="Gene3D" id="1.10.287.310">
    <property type="match status" value="1"/>
</dbReference>
<dbReference type="HAMAP" id="MF_00374">
    <property type="entry name" value="Ribosomal_uL29"/>
    <property type="match status" value="1"/>
</dbReference>
<dbReference type="InterPro" id="IPR050063">
    <property type="entry name" value="Ribosomal_protein_uL29"/>
</dbReference>
<dbReference type="InterPro" id="IPR001854">
    <property type="entry name" value="Ribosomal_uL29"/>
</dbReference>
<dbReference type="InterPro" id="IPR018254">
    <property type="entry name" value="Ribosomal_uL29_CS"/>
</dbReference>
<dbReference type="InterPro" id="IPR036049">
    <property type="entry name" value="Ribosomal_uL29_sf"/>
</dbReference>
<dbReference type="NCBIfam" id="TIGR00012">
    <property type="entry name" value="L29"/>
    <property type="match status" value="1"/>
</dbReference>
<dbReference type="PANTHER" id="PTHR10916">
    <property type="entry name" value="60S RIBOSOMAL PROTEIN L35/50S RIBOSOMAL PROTEIN L29"/>
    <property type="match status" value="1"/>
</dbReference>
<dbReference type="PANTHER" id="PTHR10916:SF0">
    <property type="entry name" value="LARGE RIBOSOMAL SUBUNIT PROTEIN UL29C"/>
    <property type="match status" value="1"/>
</dbReference>
<dbReference type="Pfam" id="PF00831">
    <property type="entry name" value="Ribosomal_L29"/>
    <property type="match status" value="1"/>
</dbReference>
<dbReference type="SUPFAM" id="SSF46561">
    <property type="entry name" value="Ribosomal protein L29 (L29p)"/>
    <property type="match status" value="1"/>
</dbReference>
<dbReference type="PROSITE" id="PS00579">
    <property type="entry name" value="RIBOSOMAL_L29"/>
    <property type="match status" value="1"/>
</dbReference>
<name>RL29_RHILW</name>
<comment type="similarity">
    <text evidence="1">Belongs to the universal ribosomal protein uL29 family.</text>
</comment>
<gene>
    <name evidence="1" type="primary">rpmC</name>
    <name type="ordered locus">Rleg2_1340</name>
</gene>
<protein>
    <recommendedName>
        <fullName evidence="1">Large ribosomal subunit protein uL29</fullName>
    </recommendedName>
    <alternativeName>
        <fullName evidence="2">50S ribosomal protein L29</fullName>
    </alternativeName>
</protein>
<feature type="chain" id="PRO_1000121805" description="Large ribosomal subunit protein uL29">
    <location>
        <begin position="1"/>
        <end position="66"/>
    </location>
</feature>
<proteinExistence type="inferred from homology"/>
<keyword id="KW-1185">Reference proteome</keyword>
<keyword id="KW-0687">Ribonucleoprotein</keyword>
<keyword id="KW-0689">Ribosomal protein</keyword>
<accession>B5ZYU3</accession>
<organism>
    <name type="scientific">Rhizobium leguminosarum bv. trifolii (strain WSM2304)</name>
    <dbReference type="NCBI Taxonomy" id="395492"/>
    <lineage>
        <taxon>Bacteria</taxon>
        <taxon>Pseudomonadati</taxon>
        <taxon>Pseudomonadota</taxon>
        <taxon>Alphaproteobacteria</taxon>
        <taxon>Hyphomicrobiales</taxon>
        <taxon>Rhizobiaceae</taxon>
        <taxon>Rhizobium/Agrobacterium group</taxon>
        <taxon>Rhizobium</taxon>
    </lineage>
</organism>
<evidence type="ECO:0000255" key="1">
    <source>
        <dbReference type="HAMAP-Rule" id="MF_00374"/>
    </source>
</evidence>
<evidence type="ECO:0000305" key="2"/>
<reference key="1">
    <citation type="journal article" date="2010" name="Stand. Genomic Sci.">
        <title>Complete genome sequence of Rhizobium leguminosarum bv trifolii strain WSM2304, an effective microsymbiont of the South American clover Trifolium polymorphum.</title>
        <authorList>
            <person name="Reeve W."/>
            <person name="O'Hara G."/>
            <person name="Chain P."/>
            <person name="Ardley J."/>
            <person name="Brau L."/>
            <person name="Nandesena K."/>
            <person name="Tiwari R."/>
            <person name="Malfatti S."/>
            <person name="Kiss H."/>
            <person name="Lapidus A."/>
            <person name="Copeland A."/>
            <person name="Nolan M."/>
            <person name="Land M."/>
            <person name="Ivanova N."/>
            <person name="Mavromatis K."/>
            <person name="Markowitz V."/>
            <person name="Kyrpides N."/>
            <person name="Melino V."/>
            <person name="Denton M."/>
            <person name="Yates R."/>
            <person name="Howieson J."/>
        </authorList>
    </citation>
    <scope>NUCLEOTIDE SEQUENCE [LARGE SCALE GENOMIC DNA]</scope>
    <source>
        <strain>WSM2304</strain>
    </source>
</reference>